<proteinExistence type="inferred from homology"/>
<sequence length="340" mass="36888">MAEEKIPTVQDEKKLQALRMATEKIEKTFGKGAIMNMGANTVEDVSVIPSGSIGLDLALGVGGYPRGRIIEIYGPESSGKTTLAIHAIAEAQKAGGLAAIIDAEHAFDRTYAEKLGVNVDNLWIAQPDNGEQALEIAEQLIRSSAVDIIVIDSVAALTPKAEIEGEMGDNKVGLHARLMSQALRKMTGAISKSNTTCIFINQLREKIGVLFGNPETTTGGNALKFYASIRIDIRKSTPIKDGEEIMGHLTKVKVLKNKVAPPFRKAEFDIVFGEGISRSGEIIDLGVELDIIKKSGSWFSYGDTKLGQGREAAKEMIRDNEELAEELTEKIREAIRNKHS</sequence>
<accession>P77925</accession>
<protein>
    <recommendedName>
        <fullName evidence="1">Protein RecA</fullName>
    </recommendedName>
    <alternativeName>
        <fullName evidence="1">Recombinase A</fullName>
    </alternativeName>
</protein>
<keyword id="KW-0067">ATP-binding</keyword>
<keyword id="KW-0963">Cytoplasm</keyword>
<keyword id="KW-0227">DNA damage</keyword>
<keyword id="KW-0233">DNA recombination</keyword>
<keyword id="KW-0234">DNA repair</keyword>
<keyword id="KW-0238">DNA-binding</keyword>
<keyword id="KW-0547">Nucleotide-binding</keyword>
<keyword id="KW-1185">Reference proteome</keyword>
<keyword id="KW-0742">SOS response</keyword>
<comment type="function">
    <text>Can catalyze the hydrolysis of ATP in the presence of single-stranded DNA, the ATP-dependent uptake of single-stranded DNA by duplex DNA, and the ATP-dependent hybridization of homologous single-stranded DNAs. It interacts with LexA causing its activation and leading to its autocatalytic cleavage.</text>
</comment>
<comment type="subcellular location">
    <subcellularLocation>
        <location evidence="1">Cytoplasm</location>
    </subcellularLocation>
</comment>
<comment type="similarity">
    <text evidence="1">Belongs to the RecA family.</text>
</comment>
<name>RECA_PORGI</name>
<organism>
    <name type="scientific">Porphyromonas gingivalis (strain ATCC BAA-308 / W83)</name>
    <dbReference type="NCBI Taxonomy" id="242619"/>
    <lineage>
        <taxon>Bacteria</taxon>
        <taxon>Pseudomonadati</taxon>
        <taxon>Bacteroidota</taxon>
        <taxon>Bacteroidia</taxon>
        <taxon>Bacteroidales</taxon>
        <taxon>Porphyromonadaceae</taxon>
        <taxon>Porphyromonas</taxon>
    </lineage>
</organism>
<feature type="chain" id="PRO_0000122793" description="Protein RecA">
    <location>
        <begin position="1"/>
        <end position="340"/>
    </location>
</feature>
<feature type="binding site" evidence="1">
    <location>
        <begin position="74"/>
        <end position="81"/>
    </location>
    <ligand>
        <name>ATP</name>
        <dbReference type="ChEBI" id="CHEBI:30616"/>
    </ligand>
</feature>
<feature type="sequence conflict" description="In Ref. 1; AAC72890." evidence="2" ref="1">
    <original>A</original>
    <variation>G</variation>
    <location>
        <position position="156"/>
    </location>
</feature>
<dbReference type="EMBL" id="AF064682">
    <property type="protein sequence ID" value="AAC72890.1"/>
    <property type="molecule type" value="Genomic_DNA"/>
</dbReference>
<dbReference type="EMBL" id="AE015924">
    <property type="protein sequence ID" value="AAQ66027.1"/>
    <property type="molecule type" value="Genomic_DNA"/>
</dbReference>
<dbReference type="RefSeq" id="WP_004584116.1">
    <property type="nucleotide sequence ID" value="NC_002950.2"/>
</dbReference>
<dbReference type="SMR" id="P77925"/>
<dbReference type="STRING" id="242619.PG_0881"/>
<dbReference type="EnsemblBacteria" id="AAQ66027">
    <property type="protein sequence ID" value="AAQ66027"/>
    <property type="gene ID" value="PG_0881"/>
</dbReference>
<dbReference type="GeneID" id="29256267"/>
<dbReference type="GeneID" id="57240117"/>
<dbReference type="KEGG" id="pgi:PG_0881"/>
<dbReference type="eggNOG" id="COG0468">
    <property type="taxonomic scope" value="Bacteria"/>
</dbReference>
<dbReference type="HOGENOM" id="CLU_040469_1_2_10"/>
<dbReference type="Proteomes" id="UP000000588">
    <property type="component" value="Chromosome"/>
</dbReference>
<dbReference type="GO" id="GO:0005829">
    <property type="term" value="C:cytosol"/>
    <property type="evidence" value="ECO:0007669"/>
    <property type="project" value="TreeGrafter"/>
</dbReference>
<dbReference type="GO" id="GO:0005524">
    <property type="term" value="F:ATP binding"/>
    <property type="evidence" value="ECO:0007669"/>
    <property type="project" value="UniProtKB-UniRule"/>
</dbReference>
<dbReference type="GO" id="GO:0016887">
    <property type="term" value="F:ATP hydrolysis activity"/>
    <property type="evidence" value="ECO:0007669"/>
    <property type="project" value="InterPro"/>
</dbReference>
<dbReference type="GO" id="GO:0140664">
    <property type="term" value="F:ATP-dependent DNA damage sensor activity"/>
    <property type="evidence" value="ECO:0007669"/>
    <property type="project" value="InterPro"/>
</dbReference>
<dbReference type="GO" id="GO:0003684">
    <property type="term" value="F:damaged DNA binding"/>
    <property type="evidence" value="ECO:0007669"/>
    <property type="project" value="UniProtKB-UniRule"/>
</dbReference>
<dbReference type="GO" id="GO:0003697">
    <property type="term" value="F:single-stranded DNA binding"/>
    <property type="evidence" value="ECO:0007669"/>
    <property type="project" value="UniProtKB-UniRule"/>
</dbReference>
<dbReference type="GO" id="GO:0006310">
    <property type="term" value="P:DNA recombination"/>
    <property type="evidence" value="ECO:0007669"/>
    <property type="project" value="UniProtKB-UniRule"/>
</dbReference>
<dbReference type="GO" id="GO:0006281">
    <property type="term" value="P:DNA repair"/>
    <property type="evidence" value="ECO:0007669"/>
    <property type="project" value="UniProtKB-UniRule"/>
</dbReference>
<dbReference type="GO" id="GO:0009432">
    <property type="term" value="P:SOS response"/>
    <property type="evidence" value="ECO:0007669"/>
    <property type="project" value="UniProtKB-UniRule"/>
</dbReference>
<dbReference type="CDD" id="cd00983">
    <property type="entry name" value="RecA"/>
    <property type="match status" value="1"/>
</dbReference>
<dbReference type="FunFam" id="3.40.50.300:FF:000087">
    <property type="entry name" value="Recombinase RecA"/>
    <property type="match status" value="1"/>
</dbReference>
<dbReference type="Gene3D" id="3.40.50.300">
    <property type="entry name" value="P-loop containing nucleotide triphosphate hydrolases"/>
    <property type="match status" value="1"/>
</dbReference>
<dbReference type="HAMAP" id="MF_00268">
    <property type="entry name" value="RecA"/>
    <property type="match status" value="1"/>
</dbReference>
<dbReference type="InterPro" id="IPR003593">
    <property type="entry name" value="AAA+_ATPase"/>
</dbReference>
<dbReference type="InterPro" id="IPR013765">
    <property type="entry name" value="DNA_recomb/repair_RecA"/>
</dbReference>
<dbReference type="InterPro" id="IPR020584">
    <property type="entry name" value="DNA_recomb/repair_RecA_CS"/>
</dbReference>
<dbReference type="InterPro" id="IPR027417">
    <property type="entry name" value="P-loop_NTPase"/>
</dbReference>
<dbReference type="InterPro" id="IPR049261">
    <property type="entry name" value="RecA-like_C"/>
</dbReference>
<dbReference type="InterPro" id="IPR049428">
    <property type="entry name" value="RecA-like_N"/>
</dbReference>
<dbReference type="InterPro" id="IPR020588">
    <property type="entry name" value="RecA_ATP-bd"/>
</dbReference>
<dbReference type="InterPro" id="IPR023400">
    <property type="entry name" value="RecA_C_sf"/>
</dbReference>
<dbReference type="InterPro" id="IPR020587">
    <property type="entry name" value="RecA_monomer-monomer_interface"/>
</dbReference>
<dbReference type="NCBIfam" id="TIGR02012">
    <property type="entry name" value="tigrfam_recA"/>
    <property type="match status" value="1"/>
</dbReference>
<dbReference type="PANTHER" id="PTHR45900:SF1">
    <property type="entry name" value="MITOCHONDRIAL DNA REPAIR PROTEIN RECA HOMOLOG-RELATED"/>
    <property type="match status" value="1"/>
</dbReference>
<dbReference type="PANTHER" id="PTHR45900">
    <property type="entry name" value="RECA"/>
    <property type="match status" value="1"/>
</dbReference>
<dbReference type="Pfam" id="PF00154">
    <property type="entry name" value="RecA"/>
    <property type="match status" value="1"/>
</dbReference>
<dbReference type="Pfam" id="PF21096">
    <property type="entry name" value="RecA_C"/>
    <property type="match status" value="1"/>
</dbReference>
<dbReference type="PRINTS" id="PR00142">
    <property type="entry name" value="RECA"/>
</dbReference>
<dbReference type="SMART" id="SM00382">
    <property type="entry name" value="AAA"/>
    <property type="match status" value="1"/>
</dbReference>
<dbReference type="SUPFAM" id="SSF52540">
    <property type="entry name" value="P-loop containing nucleoside triphosphate hydrolases"/>
    <property type="match status" value="1"/>
</dbReference>
<dbReference type="SUPFAM" id="SSF54752">
    <property type="entry name" value="RecA protein, C-terminal domain"/>
    <property type="match status" value="1"/>
</dbReference>
<dbReference type="PROSITE" id="PS00321">
    <property type="entry name" value="RECA_1"/>
    <property type="match status" value="1"/>
</dbReference>
<dbReference type="PROSITE" id="PS50162">
    <property type="entry name" value="RECA_2"/>
    <property type="match status" value="1"/>
</dbReference>
<dbReference type="PROSITE" id="PS50163">
    <property type="entry name" value="RECA_3"/>
    <property type="match status" value="1"/>
</dbReference>
<reference key="1">
    <citation type="journal article" date="1997" name="Infect. Immun.">
        <title>Nucleotide sequence of the Porphyromonas gingivalis W83 recA homolog and construction of a recA-deficient mutant.</title>
        <authorList>
            <person name="Fletcher H.M."/>
            <person name="Morgan R.M."/>
            <person name="Macrina F.L."/>
        </authorList>
    </citation>
    <scope>NUCLEOTIDE SEQUENCE [GENOMIC DNA]</scope>
    <source>
        <strain>ATCC BAA-308 / W83</strain>
    </source>
</reference>
<reference key="2">
    <citation type="journal article" date="2003" name="J. Bacteriol.">
        <title>Complete genome sequence of the oral pathogenic bacterium Porphyromonas gingivalis strain W83.</title>
        <authorList>
            <person name="Nelson K.E."/>
            <person name="Fleischmann R.D."/>
            <person name="DeBoy R.T."/>
            <person name="Paulsen I.T."/>
            <person name="Fouts D.E."/>
            <person name="Eisen J.A."/>
            <person name="Daugherty S.C."/>
            <person name="Dodson R.J."/>
            <person name="Durkin A.S."/>
            <person name="Gwinn M.L."/>
            <person name="Haft D.H."/>
            <person name="Kolonay J.F."/>
            <person name="Nelson W.C."/>
            <person name="Mason T.M."/>
            <person name="Tallon L."/>
            <person name="Gray J."/>
            <person name="Granger D."/>
            <person name="Tettelin H."/>
            <person name="Dong H."/>
            <person name="Galvin J.L."/>
            <person name="Duncan M.J."/>
            <person name="Dewhirst F.E."/>
            <person name="Fraser C.M."/>
        </authorList>
    </citation>
    <scope>NUCLEOTIDE SEQUENCE [LARGE SCALE GENOMIC DNA]</scope>
    <source>
        <strain>ATCC BAA-308 / W83</strain>
    </source>
</reference>
<gene>
    <name evidence="1" type="primary">recA</name>
    <name type="ordered locus">PG_0881</name>
</gene>
<evidence type="ECO:0000255" key="1">
    <source>
        <dbReference type="HAMAP-Rule" id="MF_00268"/>
    </source>
</evidence>
<evidence type="ECO:0000305" key="2"/>